<keyword id="KW-0963">Cytoplasm</keyword>
<keyword id="KW-0342">GTP-binding</keyword>
<keyword id="KW-0436">Ligase</keyword>
<keyword id="KW-0460">Magnesium</keyword>
<keyword id="KW-0479">Metal-binding</keyword>
<keyword id="KW-0547">Nucleotide-binding</keyword>
<keyword id="KW-0658">Purine biosynthesis</keyword>
<name>PURA_SHEPW</name>
<protein>
    <recommendedName>
        <fullName evidence="1">Adenylosuccinate synthetase</fullName>
        <shortName evidence="1">AMPSase</shortName>
        <shortName evidence="1">AdSS</shortName>
        <ecNumber evidence="1">6.3.4.4</ecNumber>
    </recommendedName>
    <alternativeName>
        <fullName evidence="1">IMP--aspartate ligase</fullName>
    </alternativeName>
</protein>
<feature type="chain" id="PRO_1000194775" description="Adenylosuccinate synthetase">
    <location>
        <begin position="1"/>
        <end position="431"/>
    </location>
</feature>
<feature type="active site" description="Proton acceptor" evidence="1">
    <location>
        <position position="14"/>
    </location>
</feature>
<feature type="active site" description="Proton donor" evidence="1">
    <location>
        <position position="42"/>
    </location>
</feature>
<feature type="binding site" evidence="1">
    <location>
        <begin position="13"/>
        <end position="19"/>
    </location>
    <ligand>
        <name>GTP</name>
        <dbReference type="ChEBI" id="CHEBI:37565"/>
    </ligand>
</feature>
<feature type="binding site" description="in other chain" evidence="1">
    <location>
        <begin position="14"/>
        <end position="17"/>
    </location>
    <ligand>
        <name>IMP</name>
        <dbReference type="ChEBI" id="CHEBI:58053"/>
        <note>ligand shared between dimeric partners</note>
    </ligand>
</feature>
<feature type="binding site" evidence="1">
    <location>
        <position position="14"/>
    </location>
    <ligand>
        <name>Mg(2+)</name>
        <dbReference type="ChEBI" id="CHEBI:18420"/>
    </ligand>
</feature>
<feature type="binding site" description="in other chain" evidence="1">
    <location>
        <begin position="39"/>
        <end position="42"/>
    </location>
    <ligand>
        <name>IMP</name>
        <dbReference type="ChEBI" id="CHEBI:58053"/>
        <note>ligand shared between dimeric partners</note>
    </ligand>
</feature>
<feature type="binding site" evidence="1">
    <location>
        <begin position="41"/>
        <end position="43"/>
    </location>
    <ligand>
        <name>GTP</name>
        <dbReference type="ChEBI" id="CHEBI:37565"/>
    </ligand>
</feature>
<feature type="binding site" evidence="1">
    <location>
        <position position="41"/>
    </location>
    <ligand>
        <name>Mg(2+)</name>
        <dbReference type="ChEBI" id="CHEBI:18420"/>
    </ligand>
</feature>
<feature type="binding site" description="in other chain" evidence="1">
    <location>
        <position position="130"/>
    </location>
    <ligand>
        <name>IMP</name>
        <dbReference type="ChEBI" id="CHEBI:58053"/>
        <note>ligand shared between dimeric partners</note>
    </ligand>
</feature>
<feature type="binding site" evidence="1">
    <location>
        <position position="144"/>
    </location>
    <ligand>
        <name>IMP</name>
        <dbReference type="ChEBI" id="CHEBI:58053"/>
        <note>ligand shared between dimeric partners</note>
    </ligand>
</feature>
<feature type="binding site" description="in other chain" evidence="1">
    <location>
        <position position="225"/>
    </location>
    <ligand>
        <name>IMP</name>
        <dbReference type="ChEBI" id="CHEBI:58053"/>
        <note>ligand shared between dimeric partners</note>
    </ligand>
</feature>
<feature type="binding site" description="in other chain" evidence="1">
    <location>
        <position position="240"/>
    </location>
    <ligand>
        <name>IMP</name>
        <dbReference type="ChEBI" id="CHEBI:58053"/>
        <note>ligand shared between dimeric partners</note>
    </ligand>
</feature>
<feature type="binding site" evidence="1">
    <location>
        <begin position="300"/>
        <end position="306"/>
    </location>
    <ligand>
        <name>substrate</name>
    </ligand>
</feature>
<feature type="binding site" description="in other chain" evidence="1">
    <location>
        <position position="304"/>
    </location>
    <ligand>
        <name>IMP</name>
        <dbReference type="ChEBI" id="CHEBI:58053"/>
        <note>ligand shared between dimeric partners</note>
    </ligand>
</feature>
<feature type="binding site" evidence="1">
    <location>
        <position position="306"/>
    </location>
    <ligand>
        <name>GTP</name>
        <dbReference type="ChEBI" id="CHEBI:37565"/>
    </ligand>
</feature>
<feature type="binding site" evidence="1">
    <location>
        <begin position="332"/>
        <end position="334"/>
    </location>
    <ligand>
        <name>GTP</name>
        <dbReference type="ChEBI" id="CHEBI:37565"/>
    </ligand>
</feature>
<feature type="binding site" evidence="1">
    <location>
        <begin position="415"/>
        <end position="417"/>
    </location>
    <ligand>
        <name>GTP</name>
        <dbReference type="ChEBI" id="CHEBI:37565"/>
    </ligand>
</feature>
<proteinExistence type="inferred from homology"/>
<organism>
    <name type="scientific">Shewanella piezotolerans (strain WP3 / JCM 13877)</name>
    <dbReference type="NCBI Taxonomy" id="225849"/>
    <lineage>
        <taxon>Bacteria</taxon>
        <taxon>Pseudomonadati</taxon>
        <taxon>Pseudomonadota</taxon>
        <taxon>Gammaproteobacteria</taxon>
        <taxon>Alteromonadales</taxon>
        <taxon>Shewanellaceae</taxon>
        <taxon>Shewanella</taxon>
    </lineage>
</organism>
<comment type="function">
    <text evidence="1">Plays an important role in the de novo pathway of purine nucleotide biosynthesis. Catalyzes the first committed step in the biosynthesis of AMP from IMP.</text>
</comment>
<comment type="catalytic activity">
    <reaction evidence="1">
        <text>IMP + L-aspartate + GTP = N(6)-(1,2-dicarboxyethyl)-AMP + GDP + phosphate + 2 H(+)</text>
        <dbReference type="Rhea" id="RHEA:15753"/>
        <dbReference type="ChEBI" id="CHEBI:15378"/>
        <dbReference type="ChEBI" id="CHEBI:29991"/>
        <dbReference type="ChEBI" id="CHEBI:37565"/>
        <dbReference type="ChEBI" id="CHEBI:43474"/>
        <dbReference type="ChEBI" id="CHEBI:57567"/>
        <dbReference type="ChEBI" id="CHEBI:58053"/>
        <dbReference type="ChEBI" id="CHEBI:58189"/>
        <dbReference type="EC" id="6.3.4.4"/>
    </reaction>
</comment>
<comment type="cofactor">
    <cofactor evidence="1">
        <name>Mg(2+)</name>
        <dbReference type="ChEBI" id="CHEBI:18420"/>
    </cofactor>
    <text evidence="1">Binds 1 Mg(2+) ion per subunit.</text>
</comment>
<comment type="pathway">
    <text evidence="1">Purine metabolism; AMP biosynthesis via de novo pathway; AMP from IMP: step 1/2.</text>
</comment>
<comment type="subunit">
    <text evidence="1">Homodimer.</text>
</comment>
<comment type="subcellular location">
    <subcellularLocation>
        <location evidence="1">Cytoplasm</location>
    </subcellularLocation>
</comment>
<comment type="similarity">
    <text evidence="1">Belongs to the adenylosuccinate synthetase family.</text>
</comment>
<reference key="1">
    <citation type="journal article" date="2008" name="PLoS ONE">
        <title>Environmental adaptation: genomic analysis of the piezotolerant and psychrotolerant deep-sea iron reducing bacterium Shewanella piezotolerans WP3.</title>
        <authorList>
            <person name="Wang F."/>
            <person name="Wang J."/>
            <person name="Jian H."/>
            <person name="Zhang B."/>
            <person name="Li S."/>
            <person name="Wang F."/>
            <person name="Zeng X."/>
            <person name="Gao L."/>
            <person name="Bartlett D.H."/>
            <person name="Yu J."/>
            <person name="Hu S."/>
            <person name="Xiao X."/>
        </authorList>
    </citation>
    <scope>NUCLEOTIDE SEQUENCE [LARGE SCALE GENOMIC DNA]</scope>
    <source>
        <strain>WP3 / JCM 13877</strain>
    </source>
</reference>
<sequence>MGKNVVVLGTQWGDEGKGKIVDLLTEQAKYVVRYQGGHNAGHTLVIDGDKTVLHLIPSGILRDNVKCIIGNGVVLAPDALMTEINMLKERGVPVEERLLISEACPLILPFHCALDMAREKARGNKAIGTTGRGIGPAYEDKVSRRGLRVGDLFNAELFAEKLKEVMAYHNFMLTEYYKCEAVDYEETLKDALAIADYLKSMCTDVSELLDQARKAGEPILFEGAQGTLLDIDHGTYPFVTSSNTTAGGVATGSGFGPRHLDYVLGIMKAYTTRVGAGPFPTELENEIGDYLGTKGHEFGATTGRKRRPGWLDIVAMKRAVQINSVSGFCLTKLDVLDGLEEVKICVGYQYPDGTVATTTPLAAEGYEQVTPVLETMPGWSETTFGATSVEQLPQAAMNYIKRLEELLETPIDIISTGPDRNETMILVNPFS</sequence>
<dbReference type="EC" id="6.3.4.4" evidence="1"/>
<dbReference type="EMBL" id="CP000472">
    <property type="protein sequence ID" value="ACJ27521.1"/>
    <property type="molecule type" value="Genomic_DNA"/>
</dbReference>
<dbReference type="RefSeq" id="WP_020910902.1">
    <property type="nucleotide sequence ID" value="NC_011566.1"/>
</dbReference>
<dbReference type="SMR" id="B8CIP5"/>
<dbReference type="STRING" id="225849.swp_0704"/>
<dbReference type="KEGG" id="swp:swp_0704"/>
<dbReference type="eggNOG" id="COG0104">
    <property type="taxonomic scope" value="Bacteria"/>
</dbReference>
<dbReference type="HOGENOM" id="CLU_029848_0_0_6"/>
<dbReference type="OrthoDB" id="9807553at2"/>
<dbReference type="UniPathway" id="UPA00075">
    <property type="reaction ID" value="UER00335"/>
</dbReference>
<dbReference type="Proteomes" id="UP000000753">
    <property type="component" value="Chromosome"/>
</dbReference>
<dbReference type="GO" id="GO:0005737">
    <property type="term" value="C:cytoplasm"/>
    <property type="evidence" value="ECO:0007669"/>
    <property type="project" value="UniProtKB-SubCell"/>
</dbReference>
<dbReference type="GO" id="GO:0004019">
    <property type="term" value="F:adenylosuccinate synthase activity"/>
    <property type="evidence" value="ECO:0007669"/>
    <property type="project" value="UniProtKB-UniRule"/>
</dbReference>
<dbReference type="GO" id="GO:0005525">
    <property type="term" value="F:GTP binding"/>
    <property type="evidence" value="ECO:0007669"/>
    <property type="project" value="UniProtKB-UniRule"/>
</dbReference>
<dbReference type="GO" id="GO:0000287">
    <property type="term" value="F:magnesium ion binding"/>
    <property type="evidence" value="ECO:0007669"/>
    <property type="project" value="UniProtKB-UniRule"/>
</dbReference>
<dbReference type="GO" id="GO:0044208">
    <property type="term" value="P:'de novo' AMP biosynthetic process"/>
    <property type="evidence" value="ECO:0007669"/>
    <property type="project" value="UniProtKB-UniRule"/>
</dbReference>
<dbReference type="GO" id="GO:0046040">
    <property type="term" value="P:IMP metabolic process"/>
    <property type="evidence" value="ECO:0007669"/>
    <property type="project" value="TreeGrafter"/>
</dbReference>
<dbReference type="CDD" id="cd03108">
    <property type="entry name" value="AdSS"/>
    <property type="match status" value="1"/>
</dbReference>
<dbReference type="FunFam" id="1.10.300.10:FF:000001">
    <property type="entry name" value="Adenylosuccinate synthetase"/>
    <property type="match status" value="1"/>
</dbReference>
<dbReference type="FunFam" id="3.90.170.10:FF:000001">
    <property type="entry name" value="Adenylosuccinate synthetase"/>
    <property type="match status" value="1"/>
</dbReference>
<dbReference type="Gene3D" id="3.40.440.10">
    <property type="entry name" value="Adenylosuccinate Synthetase, subunit A, domain 1"/>
    <property type="match status" value="1"/>
</dbReference>
<dbReference type="Gene3D" id="1.10.300.10">
    <property type="entry name" value="Adenylosuccinate Synthetase, subunit A, domain 2"/>
    <property type="match status" value="1"/>
</dbReference>
<dbReference type="Gene3D" id="3.90.170.10">
    <property type="entry name" value="Adenylosuccinate Synthetase, subunit A, domain 3"/>
    <property type="match status" value="1"/>
</dbReference>
<dbReference type="HAMAP" id="MF_00011">
    <property type="entry name" value="Adenylosucc_synth"/>
    <property type="match status" value="1"/>
</dbReference>
<dbReference type="InterPro" id="IPR018220">
    <property type="entry name" value="Adenylosuccin_syn_GTP-bd"/>
</dbReference>
<dbReference type="InterPro" id="IPR033128">
    <property type="entry name" value="Adenylosuccin_syn_Lys_AS"/>
</dbReference>
<dbReference type="InterPro" id="IPR042109">
    <property type="entry name" value="Adenylosuccinate_synth_dom1"/>
</dbReference>
<dbReference type="InterPro" id="IPR042110">
    <property type="entry name" value="Adenylosuccinate_synth_dom2"/>
</dbReference>
<dbReference type="InterPro" id="IPR042111">
    <property type="entry name" value="Adenylosuccinate_synth_dom3"/>
</dbReference>
<dbReference type="InterPro" id="IPR001114">
    <property type="entry name" value="Adenylosuccinate_synthetase"/>
</dbReference>
<dbReference type="InterPro" id="IPR027417">
    <property type="entry name" value="P-loop_NTPase"/>
</dbReference>
<dbReference type="NCBIfam" id="NF002223">
    <property type="entry name" value="PRK01117.1"/>
    <property type="match status" value="1"/>
</dbReference>
<dbReference type="NCBIfam" id="TIGR00184">
    <property type="entry name" value="purA"/>
    <property type="match status" value="1"/>
</dbReference>
<dbReference type="PANTHER" id="PTHR11846">
    <property type="entry name" value="ADENYLOSUCCINATE SYNTHETASE"/>
    <property type="match status" value="1"/>
</dbReference>
<dbReference type="PANTHER" id="PTHR11846:SF0">
    <property type="entry name" value="ADENYLOSUCCINATE SYNTHETASE"/>
    <property type="match status" value="1"/>
</dbReference>
<dbReference type="Pfam" id="PF00709">
    <property type="entry name" value="Adenylsucc_synt"/>
    <property type="match status" value="1"/>
</dbReference>
<dbReference type="SMART" id="SM00788">
    <property type="entry name" value="Adenylsucc_synt"/>
    <property type="match status" value="1"/>
</dbReference>
<dbReference type="SUPFAM" id="SSF52540">
    <property type="entry name" value="P-loop containing nucleoside triphosphate hydrolases"/>
    <property type="match status" value="1"/>
</dbReference>
<dbReference type="PROSITE" id="PS01266">
    <property type="entry name" value="ADENYLOSUCCIN_SYN_1"/>
    <property type="match status" value="1"/>
</dbReference>
<dbReference type="PROSITE" id="PS00513">
    <property type="entry name" value="ADENYLOSUCCIN_SYN_2"/>
    <property type="match status" value="1"/>
</dbReference>
<evidence type="ECO:0000255" key="1">
    <source>
        <dbReference type="HAMAP-Rule" id="MF_00011"/>
    </source>
</evidence>
<gene>
    <name evidence="1" type="primary">purA</name>
    <name type="ordered locus">swp_0704</name>
</gene>
<accession>B8CIP5</accession>